<organism>
    <name type="scientific">Gloeobacter violaceus (strain ATCC 29082 / PCC 7421)</name>
    <dbReference type="NCBI Taxonomy" id="251221"/>
    <lineage>
        <taxon>Bacteria</taxon>
        <taxon>Bacillati</taxon>
        <taxon>Cyanobacteriota</taxon>
        <taxon>Cyanophyceae</taxon>
        <taxon>Gloeobacterales</taxon>
        <taxon>Gloeobacteraceae</taxon>
        <taxon>Gloeobacter</taxon>
    </lineage>
</organism>
<evidence type="ECO:0000250" key="1">
    <source>
        <dbReference type="UniProtKB" id="Q55849"/>
    </source>
</evidence>
<evidence type="ECO:0000255" key="2">
    <source>
        <dbReference type="HAMAP-Rule" id="MF_00336"/>
    </source>
</evidence>
<evidence type="ECO:0000305" key="3"/>
<comment type="function">
    <text evidence="1 2">Catalyzes a mechanistically unusual reaction, the ATP-dependent insertion of CO2 between the N7 and N8 nitrogen atoms of 7,8-diaminopelargonic acid (DAPA, also called 7,8-diammoniononanoate) to form a ureido ring (By similarity). This cyanobacterium does not encode bioA (which catalyzes the formation of the precursor for this reaction in the cannonical pathway), instead it encodes bioU, which replaces bioA and also performs the first half of the cannonical BioD reaction. Thus in this organism BioD has a different substrate (By similarity).</text>
</comment>
<comment type="catalytic activity">
    <reaction evidence="2">
        <text>(7R,8S)-7,8-diammoniononanoate + CO2 + ATP = (4R,5S)-dethiobiotin + ADP + phosphate + 3 H(+)</text>
        <dbReference type="Rhea" id="RHEA:15805"/>
        <dbReference type="ChEBI" id="CHEBI:15378"/>
        <dbReference type="ChEBI" id="CHEBI:16526"/>
        <dbReference type="ChEBI" id="CHEBI:30616"/>
        <dbReference type="ChEBI" id="CHEBI:43474"/>
        <dbReference type="ChEBI" id="CHEBI:149469"/>
        <dbReference type="ChEBI" id="CHEBI:149473"/>
        <dbReference type="ChEBI" id="CHEBI:456216"/>
        <dbReference type="EC" id="6.3.3.3"/>
    </reaction>
</comment>
<comment type="catalytic activity">
    <reaction evidence="1 3">
        <text>(7R,8S)-8-amino-7-(carboxyamino)nonanoate + ATP = (4R,5S)-dethiobiotin + ADP + phosphate + H(+)</text>
        <dbReference type="Rhea" id="RHEA:63684"/>
        <dbReference type="ChEBI" id="CHEBI:15378"/>
        <dbReference type="ChEBI" id="CHEBI:30616"/>
        <dbReference type="ChEBI" id="CHEBI:43474"/>
        <dbReference type="ChEBI" id="CHEBI:149470"/>
        <dbReference type="ChEBI" id="CHEBI:149473"/>
        <dbReference type="ChEBI" id="CHEBI:456216"/>
    </reaction>
</comment>
<comment type="cofactor">
    <cofactor evidence="2">
        <name>Mg(2+)</name>
        <dbReference type="ChEBI" id="CHEBI:18420"/>
    </cofactor>
</comment>
<comment type="pathway">
    <text evidence="2">Cofactor biosynthesis; biotin biosynthesis; biotin from 7,8-diaminononanoate: step 1/2.</text>
</comment>
<comment type="subunit">
    <text evidence="2">Homodimer.</text>
</comment>
<comment type="subcellular location">
    <subcellularLocation>
        <location evidence="2">Cytoplasm</location>
    </subcellularLocation>
</comment>
<comment type="similarity">
    <text evidence="2">Belongs to the dethiobiotin synthetase family.</text>
</comment>
<sequence>MAGVLVSGTDTGAGKTILCAALAAWWLAHRRTPAAILKPVQCGPGDREYYRTVFGDALSVLNPLYFEAPLAPPLAAAREGQTVDIGLLWKSYCEAAAGHALVLVEGVGGLGCPLGWDYTVADLARDWRLPVLLVAPLRLGVVGQLVAHTGFARAQNLDLSALVLSEIEPVSAEQRAQWADVQLIENLCHLPVLGVLSHLEAATDRAALAAAGSGLWLEAAGTLFTAERG</sequence>
<gene>
    <name evidence="2" type="primary">bioD</name>
    <name type="ordered locus">gll3509</name>
</gene>
<keyword id="KW-0067">ATP-binding</keyword>
<keyword id="KW-0093">Biotin biosynthesis</keyword>
<keyword id="KW-0963">Cytoplasm</keyword>
<keyword id="KW-0436">Ligase</keyword>
<keyword id="KW-0460">Magnesium</keyword>
<keyword id="KW-0479">Metal-binding</keyword>
<keyword id="KW-0547">Nucleotide-binding</keyword>
<keyword id="KW-1185">Reference proteome</keyword>
<accession>Q7NFL5</accession>
<dbReference type="EC" id="6.3.3.3" evidence="2"/>
<dbReference type="EMBL" id="BA000045">
    <property type="protein sequence ID" value="BAC91450.1"/>
    <property type="molecule type" value="Genomic_DNA"/>
</dbReference>
<dbReference type="RefSeq" id="NP_926455.1">
    <property type="nucleotide sequence ID" value="NC_005125.1"/>
</dbReference>
<dbReference type="RefSeq" id="WP_011143498.1">
    <property type="nucleotide sequence ID" value="NC_005125.1"/>
</dbReference>
<dbReference type="SMR" id="Q7NFL5"/>
<dbReference type="FunCoup" id="Q7NFL5">
    <property type="interactions" value="97"/>
</dbReference>
<dbReference type="STRING" id="251221.gene:10761021"/>
<dbReference type="EnsemblBacteria" id="BAC91450">
    <property type="protein sequence ID" value="BAC91450"/>
    <property type="gene ID" value="BAC91450"/>
</dbReference>
<dbReference type="KEGG" id="gvi:gll3509"/>
<dbReference type="PATRIC" id="fig|251221.4.peg.3543"/>
<dbReference type="eggNOG" id="COG0132">
    <property type="taxonomic scope" value="Bacteria"/>
</dbReference>
<dbReference type="HOGENOM" id="CLU_072551_3_1_3"/>
<dbReference type="InParanoid" id="Q7NFL5"/>
<dbReference type="OrthoDB" id="9802097at2"/>
<dbReference type="PhylomeDB" id="Q7NFL5"/>
<dbReference type="UniPathway" id="UPA00078">
    <property type="reaction ID" value="UER00161"/>
</dbReference>
<dbReference type="Proteomes" id="UP000000557">
    <property type="component" value="Chromosome"/>
</dbReference>
<dbReference type="GO" id="GO:0005829">
    <property type="term" value="C:cytosol"/>
    <property type="evidence" value="ECO:0000318"/>
    <property type="project" value="GO_Central"/>
</dbReference>
<dbReference type="GO" id="GO:0005524">
    <property type="term" value="F:ATP binding"/>
    <property type="evidence" value="ECO:0007669"/>
    <property type="project" value="UniProtKB-UniRule"/>
</dbReference>
<dbReference type="GO" id="GO:0004141">
    <property type="term" value="F:dethiobiotin synthase activity"/>
    <property type="evidence" value="ECO:0000318"/>
    <property type="project" value="GO_Central"/>
</dbReference>
<dbReference type="GO" id="GO:0000287">
    <property type="term" value="F:magnesium ion binding"/>
    <property type="evidence" value="ECO:0007669"/>
    <property type="project" value="UniProtKB-UniRule"/>
</dbReference>
<dbReference type="GO" id="GO:0009102">
    <property type="term" value="P:biotin biosynthetic process"/>
    <property type="evidence" value="ECO:0000318"/>
    <property type="project" value="GO_Central"/>
</dbReference>
<dbReference type="CDD" id="cd03109">
    <property type="entry name" value="DTBS"/>
    <property type="match status" value="1"/>
</dbReference>
<dbReference type="Gene3D" id="3.40.50.300">
    <property type="entry name" value="P-loop containing nucleotide triphosphate hydrolases"/>
    <property type="match status" value="1"/>
</dbReference>
<dbReference type="HAMAP" id="MF_00336">
    <property type="entry name" value="BioD"/>
    <property type="match status" value="1"/>
</dbReference>
<dbReference type="InterPro" id="IPR004472">
    <property type="entry name" value="DTB_synth_BioD"/>
</dbReference>
<dbReference type="InterPro" id="IPR027417">
    <property type="entry name" value="P-loop_NTPase"/>
</dbReference>
<dbReference type="NCBIfam" id="TIGR00347">
    <property type="entry name" value="bioD"/>
    <property type="match status" value="1"/>
</dbReference>
<dbReference type="PANTHER" id="PTHR43210:SF2">
    <property type="entry name" value="ATP-DEPENDENT DETHIOBIOTIN SYNTHETASE BIOD 2"/>
    <property type="match status" value="1"/>
</dbReference>
<dbReference type="PANTHER" id="PTHR43210">
    <property type="entry name" value="DETHIOBIOTIN SYNTHETASE"/>
    <property type="match status" value="1"/>
</dbReference>
<dbReference type="Pfam" id="PF13500">
    <property type="entry name" value="AAA_26"/>
    <property type="match status" value="1"/>
</dbReference>
<dbReference type="PIRSF" id="PIRSF006755">
    <property type="entry name" value="DTB_synth"/>
    <property type="match status" value="1"/>
</dbReference>
<dbReference type="SUPFAM" id="SSF52540">
    <property type="entry name" value="P-loop containing nucleoside triphosphate hydrolases"/>
    <property type="match status" value="1"/>
</dbReference>
<protein>
    <recommendedName>
        <fullName evidence="2">ATP-dependent dethiobiotin synthetase BioD</fullName>
        <ecNumber evidence="2">6.3.3.3</ecNumber>
    </recommendedName>
    <alternativeName>
        <fullName evidence="2">DTB synthetase</fullName>
        <shortName evidence="2">DTBS</shortName>
    </alternativeName>
    <alternativeName>
        <fullName evidence="2">Dethiobiotin synthase</fullName>
    </alternativeName>
</protein>
<proteinExistence type="inferred from homology"/>
<feature type="chain" id="PRO_0000302512" description="ATP-dependent dethiobiotin synthetase BioD">
    <location>
        <begin position="1"/>
        <end position="229"/>
    </location>
</feature>
<feature type="active site" evidence="2">
    <location>
        <position position="38"/>
    </location>
</feature>
<feature type="binding site" evidence="2">
    <location>
        <begin position="12"/>
        <end position="17"/>
    </location>
    <ligand>
        <name>ATP</name>
        <dbReference type="ChEBI" id="CHEBI:30616"/>
    </ligand>
</feature>
<feature type="binding site" evidence="2">
    <location>
        <position position="16"/>
    </location>
    <ligand>
        <name>Mg(2+)</name>
        <dbReference type="ChEBI" id="CHEBI:18420"/>
    </ligand>
</feature>
<feature type="binding site" evidence="2">
    <location>
        <position position="46"/>
    </location>
    <ligand>
        <name>ATP</name>
        <dbReference type="ChEBI" id="CHEBI:30616"/>
    </ligand>
</feature>
<feature type="binding site" evidence="2">
    <location>
        <position position="46"/>
    </location>
    <ligand>
        <name>Mg(2+)</name>
        <dbReference type="ChEBI" id="CHEBI:18420"/>
    </ligand>
</feature>
<feature type="binding site" evidence="2">
    <location>
        <begin position="105"/>
        <end position="108"/>
    </location>
    <ligand>
        <name>ATP</name>
        <dbReference type="ChEBI" id="CHEBI:30616"/>
    </ligand>
</feature>
<feature type="binding site" evidence="2">
    <location>
        <position position="105"/>
    </location>
    <ligand>
        <name>Mg(2+)</name>
        <dbReference type="ChEBI" id="CHEBI:18420"/>
    </ligand>
</feature>
<feature type="binding site" evidence="2">
    <location>
        <begin position="165"/>
        <end position="166"/>
    </location>
    <ligand>
        <name>ATP</name>
        <dbReference type="ChEBI" id="CHEBI:30616"/>
    </ligand>
</feature>
<name>BIOD_GLOVI</name>
<reference key="1">
    <citation type="journal article" date="2003" name="DNA Res.">
        <title>Complete genome structure of Gloeobacter violaceus PCC 7421, a cyanobacterium that lacks thylakoids.</title>
        <authorList>
            <person name="Nakamura Y."/>
            <person name="Kaneko T."/>
            <person name="Sato S."/>
            <person name="Mimuro M."/>
            <person name="Miyashita H."/>
            <person name="Tsuchiya T."/>
            <person name="Sasamoto S."/>
            <person name="Watanabe A."/>
            <person name="Kawashima K."/>
            <person name="Kishida Y."/>
            <person name="Kiyokawa C."/>
            <person name="Kohara M."/>
            <person name="Matsumoto M."/>
            <person name="Matsuno A."/>
            <person name="Nakazaki N."/>
            <person name="Shimpo S."/>
            <person name="Takeuchi C."/>
            <person name="Yamada M."/>
            <person name="Tabata S."/>
        </authorList>
    </citation>
    <scope>NUCLEOTIDE SEQUENCE [LARGE SCALE GENOMIC DNA]</scope>
    <source>
        <strain>ATCC 29082 / PCC 7421</strain>
    </source>
</reference>